<sequence>MSVTKSTEGPQGAVAIKLDLMSPPESAKKLENKDSTFLDESPSESAGLKKTKGITVFQALIHLVKGNMGTGILGLPLAVKNAGILMGPLSLLVMGFIACHCMHILVKCAQRFCKRLNKPFMDYGDTVMHGLEANPNAWLQNHAHWGRHIVSFFLIITQLGFCCVYIVFLADNLKQVVEAVNSTTNNCYSNETVILTPTMDSRLYMLSFLPFLVLLVLIRNLRILTIFSMLANISMLVSLVIIIQYITQEIPDPSRLPLVASWKTYPLFFGTAIFSFESIGVVLPLENKMKNARHFPAILSLGMSIVTSLYIGMAALGYLRFGDDIKASISLNLPNCWLYQSVKLLYIAGILCTYALQFYVPAEIIIPFAISRVSTRWALPLDLSIRLVMVCLTCLLAILIPRLDLVISLVGSVSGTALALIIPPLLEVTTFYSEGMSPLTIFKDALISILGFVGFVVGTYQALDELLKSEDSHPFSNSTTFVR</sequence>
<evidence type="ECO:0000250" key="1">
    <source>
        <dbReference type="UniProtKB" id="Q8BHK3"/>
    </source>
</evidence>
<evidence type="ECO:0000255" key="2"/>
<evidence type="ECO:0000256" key="3">
    <source>
        <dbReference type="SAM" id="MobiDB-lite"/>
    </source>
</evidence>
<evidence type="ECO:0000269" key="4">
    <source>
    </source>
</evidence>
<evidence type="ECO:0000269" key="5">
    <source>
    </source>
</evidence>
<evidence type="ECO:0000269" key="6">
    <source>
    </source>
</evidence>
<evidence type="ECO:0000303" key="7">
    <source>
    </source>
</evidence>
<evidence type="ECO:0000303" key="8">
    <source>
    </source>
</evidence>
<evidence type="ECO:0000303" key="9">
    <source>
    </source>
</evidence>
<evidence type="ECO:0000305" key="10"/>
<evidence type="ECO:0000305" key="11">
    <source>
    </source>
</evidence>
<evidence type="ECO:0000312" key="12">
    <source>
        <dbReference type="HGNC" id="HGNC:18762"/>
    </source>
</evidence>
<protein>
    <recommendedName>
        <fullName evidence="11">Proton-coupled amino acid transporter 2</fullName>
        <shortName evidence="7">Proton/amino acid transporter 2</shortName>
    </recommendedName>
    <alternativeName>
        <fullName evidence="12">Solute carrier family 36 member 2</fullName>
    </alternativeName>
    <alternativeName>
        <fullName evidence="8">Transmembrane domain rich protein 1</fullName>
        <shortName evidence="8">Tramdorin-1</shortName>
    </alternativeName>
</protein>
<organism>
    <name type="scientific">Homo sapiens</name>
    <name type="common">Human</name>
    <dbReference type="NCBI Taxonomy" id="9606"/>
    <lineage>
        <taxon>Eukaryota</taxon>
        <taxon>Metazoa</taxon>
        <taxon>Chordata</taxon>
        <taxon>Craniata</taxon>
        <taxon>Vertebrata</taxon>
        <taxon>Euteleostomi</taxon>
        <taxon>Mammalia</taxon>
        <taxon>Eutheria</taxon>
        <taxon>Euarchontoglires</taxon>
        <taxon>Primates</taxon>
        <taxon>Haplorrhini</taxon>
        <taxon>Catarrhini</taxon>
        <taxon>Hominidae</taxon>
        <taxon>Homo</taxon>
    </lineage>
</organism>
<name>S36A2_HUMAN</name>
<keyword id="KW-0025">Alternative splicing</keyword>
<keyword id="KW-0029">Amino-acid transport</keyword>
<keyword id="KW-1003">Cell membrane</keyword>
<keyword id="KW-0225">Disease variant</keyword>
<keyword id="KW-0256">Endoplasmic reticulum</keyword>
<keyword id="KW-0967">Endosome</keyword>
<keyword id="KW-0472">Membrane</keyword>
<keyword id="KW-1267">Proteomics identification</keyword>
<keyword id="KW-1185">Reference proteome</keyword>
<keyword id="KW-0812">Transmembrane</keyword>
<keyword id="KW-1133">Transmembrane helix</keyword>
<keyword id="KW-0813">Transport</keyword>
<accession>Q495M3</accession>
<accession>Q495M4</accession>
<accession>Q495M6</accession>
<accession>Q6ZWK5</accession>
<accession>Q7Z6B5</accession>
<reference key="1">
    <citation type="journal article" date="2003" name="Genomics">
        <title>A cluster of proton/amino acid transporter genes in the human and mouse genomes.</title>
        <authorList>
            <person name="Boll M."/>
            <person name="Foltz M."/>
            <person name="Rubio-Aliaga I."/>
            <person name="Daniel H."/>
        </authorList>
    </citation>
    <scope>NUCLEOTIDE SEQUENCE [MRNA] (ISOFORM 1)</scope>
    <scope>FUNCTION</scope>
    <scope>TRANSPORTER ACTIVITY</scope>
    <source>
        <tissue>Testis</tissue>
    </source>
</reference>
<reference key="2">
    <citation type="journal article" date="2004" name="Nat. Genet.">
        <title>Complete sequencing and characterization of 21,243 full-length human cDNAs.</title>
        <authorList>
            <person name="Ota T."/>
            <person name="Suzuki Y."/>
            <person name="Nishikawa T."/>
            <person name="Otsuki T."/>
            <person name="Sugiyama T."/>
            <person name="Irie R."/>
            <person name="Wakamatsu A."/>
            <person name="Hayashi K."/>
            <person name="Sato H."/>
            <person name="Nagai K."/>
            <person name="Kimura K."/>
            <person name="Makita H."/>
            <person name="Sekine M."/>
            <person name="Obayashi M."/>
            <person name="Nishi T."/>
            <person name="Shibahara T."/>
            <person name="Tanaka T."/>
            <person name="Ishii S."/>
            <person name="Yamamoto J."/>
            <person name="Saito K."/>
            <person name="Kawai Y."/>
            <person name="Isono Y."/>
            <person name="Nakamura Y."/>
            <person name="Nagahari K."/>
            <person name="Murakami K."/>
            <person name="Yasuda T."/>
            <person name="Iwayanagi T."/>
            <person name="Wagatsuma M."/>
            <person name="Shiratori A."/>
            <person name="Sudo H."/>
            <person name="Hosoiri T."/>
            <person name="Kaku Y."/>
            <person name="Kodaira H."/>
            <person name="Kondo H."/>
            <person name="Sugawara M."/>
            <person name="Takahashi M."/>
            <person name="Kanda K."/>
            <person name="Yokoi T."/>
            <person name="Furuya T."/>
            <person name="Kikkawa E."/>
            <person name="Omura Y."/>
            <person name="Abe K."/>
            <person name="Kamihara K."/>
            <person name="Katsuta N."/>
            <person name="Sato K."/>
            <person name="Tanikawa M."/>
            <person name="Yamazaki M."/>
            <person name="Ninomiya K."/>
            <person name="Ishibashi T."/>
            <person name="Yamashita H."/>
            <person name="Murakawa K."/>
            <person name="Fujimori K."/>
            <person name="Tanai H."/>
            <person name="Kimata M."/>
            <person name="Watanabe M."/>
            <person name="Hiraoka S."/>
            <person name="Chiba Y."/>
            <person name="Ishida S."/>
            <person name="Ono Y."/>
            <person name="Takiguchi S."/>
            <person name="Watanabe S."/>
            <person name="Yosida M."/>
            <person name="Hotuta T."/>
            <person name="Kusano J."/>
            <person name="Kanehori K."/>
            <person name="Takahashi-Fujii A."/>
            <person name="Hara H."/>
            <person name="Tanase T.-O."/>
            <person name="Nomura Y."/>
            <person name="Togiya S."/>
            <person name="Komai F."/>
            <person name="Hara R."/>
            <person name="Takeuchi K."/>
            <person name="Arita M."/>
            <person name="Imose N."/>
            <person name="Musashino K."/>
            <person name="Yuuki H."/>
            <person name="Oshima A."/>
            <person name="Sasaki N."/>
            <person name="Aotsuka S."/>
            <person name="Yoshikawa Y."/>
            <person name="Matsunawa H."/>
            <person name="Ichihara T."/>
            <person name="Shiohata N."/>
            <person name="Sano S."/>
            <person name="Moriya S."/>
            <person name="Momiyama H."/>
            <person name="Satoh N."/>
            <person name="Takami S."/>
            <person name="Terashima Y."/>
            <person name="Suzuki O."/>
            <person name="Nakagawa S."/>
            <person name="Senoh A."/>
            <person name="Mizoguchi H."/>
            <person name="Goto Y."/>
            <person name="Shimizu F."/>
            <person name="Wakebe H."/>
            <person name="Hishigaki H."/>
            <person name="Watanabe T."/>
            <person name="Sugiyama A."/>
            <person name="Takemoto M."/>
            <person name="Kawakami B."/>
            <person name="Yamazaki M."/>
            <person name="Watanabe K."/>
            <person name="Kumagai A."/>
            <person name="Itakura S."/>
            <person name="Fukuzumi Y."/>
            <person name="Fujimori Y."/>
            <person name="Komiyama M."/>
            <person name="Tashiro H."/>
            <person name="Tanigami A."/>
            <person name="Fujiwara T."/>
            <person name="Ono T."/>
            <person name="Yamada K."/>
            <person name="Fujii Y."/>
            <person name="Ozaki K."/>
            <person name="Hirao M."/>
            <person name="Ohmori Y."/>
            <person name="Kawabata A."/>
            <person name="Hikiji T."/>
            <person name="Kobatake N."/>
            <person name="Inagaki H."/>
            <person name="Ikema Y."/>
            <person name="Okamoto S."/>
            <person name="Okitani R."/>
            <person name="Kawakami T."/>
            <person name="Noguchi S."/>
            <person name="Itoh T."/>
            <person name="Shigeta K."/>
            <person name="Senba T."/>
            <person name="Matsumura K."/>
            <person name="Nakajima Y."/>
            <person name="Mizuno T."/>
            <person name="Morinaga M."/>
            <person name="Sasaki M."/>
            <person name="Togashi T."/>
            <person name="Oyama M."/>
            <person name="Hata H."/>
            <person name="Watanabe M."/>
            <person name="Komatsu T."/>
            <person name="Mizushima-Sugano J."/>
            <person name="Satoh T."/>
            <person name="Shirai Y."/>
            <person name="Takahashi Y."/>
            <person name="Nakagawa K."/>
            <person name="Okumura K."/>
            <person name="Nagase T."/>
            <person name="Nomura N."/>
            <person name="Kikuchi H."/>
            <person name="Masuho Y."/>
            <person name="Yamashita R."/>
            <person name="Nakai K."/>
            <person name="Yada T."/>
            <person name="Nakamura Y."/>
            <person name="Ohara O."/>
            <person name="Isogai T."/>
            <person name="Sugano S."/>
        </authorList>
    </citation>
    <scope>NUCLEOTIDE SEQUENCE [LARGE SCALE MRNA] (ISOFORM 1)</scope>
    <source>
        <tissue>Kidney</tissue>
    </source>
</reference>
<reference key="3">
    <citation type="submission" date="2005-09" db="EMBL/GenBank/DDBJ databases">
        <authorList>
            <person name="Mural R.J."/>
            <person name="Istrail S."/>
            <person name="Sutton G.G."/>
            <person name="Florea L."/>
            <person name="Halpern A.L."/>
            <person name="Mobarry C.M."/>
            <person name="Lippert R."/>
            <person name="Walenz B."/>
            <person name="Shatkay H."/>
            <person name="Dew I."/>
            <person name="Miller J.R."/>
            <person name="Flanigan M.J."/>
            <person name="Edwards N.J."/>
            <person name="Bolanos R."/>
            <person name="Fasulo D."/>
            <person name="Halldorsson B.V."/>
            <person name="Hannenhalli S."/>
            <person name="Turner R."/>
            <person name="Yooseph S."/>
            <person name="Lu F."/>
            <person name="Nusskern D.R."/>
            <person name="Shue B.C."/>
            <person name="Zheng X.H."/>
            <person name="Zhong F."/>
            <person name="Delcher A.L."/>
            <person name="Huson D.H."/>
            <person name="Kravitz S.A."/>
            <person name="Mouchard L."/>
            <person name="Reinert K."/>
            <person name="Remington K.A."/>
            <person name="Clark A.G."/>
            <person name="Waterman M.S."/>
            <person name="Eichler E.E."/>
            <person name="Adams M.D."/>
            <person name="Hunkapiller M.W."/>
            <person name="Myers E.W."/>
            <person name="Venter J.C."/>
        </authorList>
    </citation>
    <scope>NUCLEOTIDE SEQUENCE [LARGE SCALE GENOMIC DNA]</scope>
</reference>
<reference key="4">
    <citation type="journal article" date="2004" name="Genome Res.">
        <title>The status, quality, and expansion of the NIH full-length cDNA project: the Mammalian Gene Collection (MGC).</title>
        <authorList>
            <consortium name="The MGC Project Team"/>
        </authorList>
    </citation>
    <scope>NUCLEOTIDE SEQUENCE [LARGE SCALE MRNA] (ISOFORMS 1; 2 AND 3)</scope>
</reference>
<reference key="5">
    <citation type="journal article" date="2004" name="Mamm. Genome">
        <title>Organization and expression of the SLC36 cluster of amino acid transporter genes.</title>
        <authorList>
            <person name="Bermingham J.R. Jr."/>
            <person name="Pennington J."/>
        </authorList>
    </citation>
    <scope>TISSUE SPECIFICITY</scope>
</reference>
<reference key="6">
    <citation type="journal article" date="2008" name="J. Clin. Invest.">
        <title>Iminoglycinuria and hyperglycinuria are discrete human phenotypes resulting from complex mutations in proline and glycine transporters.</title>
        <authorList>
            <person name="Broer S."/>
            <person name="Bailey C.G."/>
            <person name="Kowalczuk S."/>
            <person name="Ng C."/>
            <person name="Vanslambrouck J.M."/>
            <person name="Rodgers H."/>
            <person name="Auray-Blais C."/>
            <person name="Cavanaugh J.A."/>
            <person name="Broer A."/>
            <person name="Rasko J.E."/>
        </authorList>
    </citation>
    <scope>VARIANT IG VAL-87</scope>
    <scope>VARIANT HGLY VAL-87</scope>
    <scope>CHARACTERIZATION OF VARIANT HGLY VAL-87</scope>
    <scope>FUNCTION</scope>
    <scope>TRANSPORTER ACTIVITY</scope>
    <scope>SUBCELLULAR LOCATION</scope>
    <scope>TISSUE SPECIFICITY</scope>
</reference>
<proteinExistence type="evidence at protein level"/>
<feature type="chain" id="PRO_0000324819" description="Proton-coupled amino acid transporter 2">
    <location>
        <begin position="1"/>
        <end position="483"/>
    </location>
</feature>
<feature type="topological domain" description="Cytoplasmic" evidence="2">
    <location>
        <begin position="1"/>
        <end position="58"/>
    </location>
</feature>
<feature type="transmembrane region" description="Helical" evidence="2">
    <location>
        <begin position="59"/>
        <end position="79"/>
    </location>
</feature>
<feature type="topological domain" description="Extracellular" evidence="2">
    <location>
        <begin position="80"/>
        <end position="81"/>
    </location>
</feature>
<feature type="transmembrane region" description="Helical" evidence="2">
    <location>
        <begin position="82"/>
        <end position="102"/>
    </location>
</feature>
<feature type="topological domain" description="Cytoplasmic" evidence="2">
    <location>
        <begin position="103"/>
        <end position="148"/>
    </location>
</feature>
<feature type="transmembrane region" description="Helical" evidence="2">
    <location>
        <begin position="149"/>
        <end position="169"/>
    </location>
</feature>
<feature type="topological domain" description="Extracellular" evidence="2">
    <location>
        <begin position="170"/>
        <end position="197"/>
    </location>
</feature>
<feature type="transmembrane region" description="Helical" evidence="2">
    <location>
        <begin position="198"/>
        <end position="218"/>
    </location>
</feature>
<feature type="topological domain" description="Cytoplasmic" evidence="2">
    <location>
        <begin position="219"/>
        <end position="222"/>
    </location>
</feature>
<feature type="transmembrane region" description="Helical" evidence="2">
    <location>
        <begin position="223"/>
        <end position="243"/>
    </location>
</feature>
<feature type="topological domain" description="Extracellular" evidence="2">
    <location>
        <begin position="244"/>
        <end position="264"/>
    </location>
</feature>
<feature type="transmembrane region" description="Helical" evidence="2">
    <location>
        <begin position="265"/>
        <end position="285"/>
    </location>
</feature>
<feature type="topological domain" description="Cytoplasmic" evidence="2">
    <location>
        <begin position="286"/>
        <end position="296"/>
    </location>
</feature>
<feature type="transmembrane region" description="Helical" evidence="2">
    <location>
        <begin position="297"/>
        <end position="317"/>
    </location>
</feature>
<feature type="topological domain" description="Extracellular" evidence="2">
    <location>
        <begin position="318"/>
        <end position="349"/>
    </location>
</feature>
<feature type="transmembrane region" description="Helical" evidence="2">
    <location>
        <begin position="350"/>
        <end position="370"/>
    </location>
</feature>
<feature type="topological domain" description="Cytoplasmic" evidence="2">
    <location>
        <begin position="371"/>
        <end position="379"/>
    </location>
</feature>
<feature type="transmembrane region" description="Helical" evidence="2">
    <location>
        <begin position="380"/>
        <end position="400"/>
    </location>
</feature>
<feature type="topological domain" description="Extracellular" evidence="2">
    <location>
        <begin position="401"/>
        <end position="404"/>
    </location>
</feature>
<feature type="transmembrane region" description="Helical" evidence="2">
    <location>
        <begin position="405"/>
        <end position="425"/>
    </location>
</feature>
<feature type="topological domain" description="Cytoplasmic" evidence="2">
    <location>
        <begin position="426"/>
        <end position="437"/>
    </location>
</feature>
<feature type="transmembrane region" description="Helical" evidence="2">
    <location>
        <begin position="438"/>
        <end position="458"/>
    </location>
</feature>
<feature type="topological domain" description="Extracellular" evidence="2">
    <location>
        <begin position="459"/>
        <end position="483"/>
    </location>
</feature>
<feature type="region of interest" description="Disordered" evidence="3">
    <location>
        <begin position="26"/>
        <end position="46"/>
    </location>
</feature>
<feature type="compositionally biased region" description="Basic and acidic residues" evidence="3">
    <location>
        <begin position="26"/>
        <end position="36"/>
    </location>
</feature>
<feature type="splice variant" id="VSP_032371" description="In isoform 3." evidence="9">
    <location>
        <begin position="1"/>
        <end position="276"/>
    </location>
</feature>
<feature type="splice variant" id="VSP_032372" description="In isoform 2." evidence="9">
    <location>
        <begin position="1"/>
        <end position="198"/>
    </location>
</feature>
<feature type="splice variant" id="VSP_032373" description="In isoform 3." evidence="9">
    <original>ESIGV</original>
    <variation>MNDTA</variation>
    <location>
        <begin position="277"/>
        <end position="281"/>
    </location>
</feature>
<feature type="sequence variant" id="VAR_064795" description="In HGLY and IG; no effect on localization to the plasma membrane; decreased amino acid:proton symporter activity; no effect on protein reaction kinetics; decreased affinity for proline; 3-fold increase of Km value for proline; decreased affinity for glycine; 5-fold increase of Km for glycine; dbSNP:rs77010315." evidence="6">
    <original>G</original>
    <variation>V</variation>
    <location>
        <position position="87"/>
    </location>
</feature>
<feature type="sequence variant" id="VAR_039887" description="In dbSNP:rs10042608.">
    <original>A</original>
    <variation>V</variation>
    <location>
        <position position="445"/>
    </location>
</feature>
<feature type="sequence conflict" description="In Ref. 1; AAO11788." evidence="10" ref="1">
    <original>I</original>
    <variation>N</variation>
    <location>
        <position position="156"/>
    </location>
</feature>
<feature type="sequence conflict" description="In Ref. 1; AAO11788." evidence="10" ref="1">
    <original>S</original>
    <variation>P</variation>
    <location>
        <position position="408"/>
    </location>
</feature>
<feature type="sequence conflict" description="In Ref. 2; BAC85496." evidence="10" ref="2">
    <original>V</original>
    <variation>M</variation>
    <location>
        <position position="410"/>
    </location>
</feature>
<feature type="sequence conflict" description="In Ref. 2; BAC85496." evidence="10" ref="2">
    <original>T</original>
    <variation>P</variation>
    <location>
        <position position="429"/>
    </location>
</feature>
<comment type="function">
    <text evidence="4 6">Electrogenic proton/amino acid symporter with a high selectivity for the small side chains amino acids glycine, alanine and proline, where both L- and D-enantiomers are transported. Extension of the backbone length, as in beta-alanine and 4-aminobutanoate or methylation of the amino group, as in sarcosine and N,N-dimethylglycine, are also tolerated but decrease transport efficiency. A free carboxyl group is preferred.</text>
</comment>
<comment type="catalytic activity">
    <reaction evidence="4">
        <text>glycine(in) + H(+)(in) = glycine(out) + H(+)(out)</text>
        <dbReference type="Rhea" id="RHEA:28899"/>
        <dbReference type="ChEBI" id="CHEBI:15378"/>
        <dbReference type="ChEBI" id="CHEBI:57305"/>
    </reaction>
</comment>
<comment type="catalytic activity">
    <reaction evidence="1">
        <text>L-alanine(in) + H(+)(in) = L-alanine(out) + H(+)(out)</text>
        <dbReference type="Rhea" id="RHEA:29443"/>
        <dbReference type="ChEBI" id="CHEBI:15378"/>
        <dbReference type="ChEBI" id="CHEBI:57972"/>
    </reaction>
</comment>
<comment type="catalytic activity">
    <reaction evidence="1">
        <text>D-alanine(in) + H(+)(in) = D-alanine(out) + H(+)(out)</text>
        <dbReference type="Rhea" id="RHEA:28903"/>
        <dbReference type="ChEBI" id="CHEBI:15378"/>
        <dbReference type="ChEBI" id="CHEBI:57416"/>
    </reaction>
</comment>
<comment type="catalytic activity">
    <reaction evidence="4">
        <text>L-proline(out) + H(+)(out) = L-proline(in) + H(+)(in)</text>
        <dbReference type="Rhea" id="RHEA:28963"/>
        <dbReference type="ChEBI" id="CHEBI:15378"/>
        <dbReference type="ChEBI" id="CHEBI:60039"/>
    </reaction>
</comment>
<comment type="catalytic activity">
    <reaction evidence="1">
        <text>D-proline(out) + H(+)(out) = D-proline(in) + H(+)(in)</text>
        <dbReference type="Rhea" id="RHEA:70643"/>
        <dbReference type="ChEBI" id="CHEBI:15378"/>
        <dbReference type="ChEBI" id="CHEBI:57726"/>
    </reaction>
</comment>
<comment type="catalytic activity">
    <reaction evidence="1">
        <text>4-hydroxy-L-proline(in) + H(+)(in) = 4-hydroxy-L-proline(out) + H(+)(out)</text>
        <dbReference type="Rhea" id="RHEA:70663"/>
        <dbReference type="ChEBI" id="CHEBI:15378"/>
        <dbReference type="ChEBI" id="CHEBI:58419"/>
    </reaction>
</comment>
<comment type="catalytic activity">
    <reaction evidence="1">
        <text>L-serine(in) + H(+)(in) = L-serine(out) + H(+)(out)</text>
        <dbReference type="Rhea" id="RHEA:28887"/>
        <dbReference type="ChEBI" id="CHEBI:15378"/>
        <dbReference type="ChEBI" id="CHEBI:33384"/>
    </reaction>
</comment>
<comment type="catalytic activity">
    <reaction evidence="1">
        <text>D-serine(out) + H(+)(out) = D-serine(in) + H(+)(in)</text>
        <dbReference type="Rhea" id="RHEA:70647"/>
        <dbReference type="ChEBI" id="CHEBI:15378"/>
        <dbReference type="ChEBI" id="CHEBI:35247"/>
    </reaction>
</comment>
<comment type="catalytic activity">
    <reaction evidence="1">
        <text>beta-alanine(in) + H(+)(in) = beta-alanine(out) + H(+)(out)</text>
        <dbReference type="Rhea" id="RHEA:29459"/>
        <dbReference type="ChEBI" id="CHEBI:15378"/>
        <dbReference type="ChEBI" id="CHEBI:57966"/>
    </reaction>
</comment>
<comment type="catalytic activity">
    <reaction evidence="1">
        <text>4-aminobutanoate(in) + H(+)(in) = 4-aminobutanoate(out) + H(+)(out)</text>
        <dbReference type="Rhea" id="RHEA:28915"/>
        <dbReference type="ChEBI" id="CHEBI:15378"/>
        <dbReference type="ChEBI" id="CHEBI:59888"/>
    </reaction>
</comment>
<comment type="catalytic activity">
    <reaction evidence="1">
        <text>sarcosine(in) + H(+)(in) = sarcosine(out) + H(+)(out)</text>
        <dbReference type="Rhea" id="RHEA:70655"/>
        <dbReference type="ChEBI" id="CHEBI:15378"/>
        <dbReference type="ChEBI" id="CHEBI:57433"/>
    </reaction>
</comment>
<comment type="catalytic activity">
    <reaction evidence="1">
        <text>N,N-dimethylglycine(in) + H(+)(in) = N,N-dimethylglycine(out) + H(+)(out)</text>
        <dbReference type="Rhea" id="RHEA:70659"/>
        <dbReference type="ChEBI" id="CHEBI:15378"/>
        <dbReference type="ChEBI" id="CHEBI:58251"/>
    </reaction>
</comment>
<comment type="subcellular location">
    <subcellularLocation>
        <location evidence="6">Cell membrane</location>
        <topology evidence="2">Multi-pass membrane protein</topology>
    </subcellularLocation>
    <subcellularLocation>
        <location evidence="1">Endoplasmic reticulum membrane</location>
    </subcellularLocation>
    <subcellularLocation>
        <location evidence="1">Recycling endosome membrane</location>
    </subcellularLocation>
</comment>
<comment type="alternative products">
    <event type="alternative splicing"/>
    <isoform>
        <id>Q495M3-1</id>
        <name>1</name>
        <sequence type="displayed"/>
    </isoform>
    <isoform>
        <id>Q495M3-2</id>
        <name>2</name>
        <sequence type="described" ref="VSP_032372"/>
    </isoform>
    <isoform>
        <id>Q495M3-3</id>
        <name>3</name>
        <sequence type="described" ref="VSP_032371 VSP_032373"/>
    </isoform>
</comment>
<comment type="tissue specificity">
    <text evidence="5 6">Abundantly expressed in kidney and muscle. Expressed in the S1 segment of the proximal tubule close to the glomerulus.</text>
</comment>
<comment type="disease" evidence="6">
    <disease id="DI-02939">
        <name>Hyperglycinuria</name>
        <acronym>HGLY</acronym>
        <description>A condition characterized by excess of glycine in the urine. In some cases it is associated with renal colic and renal oxalate stones.</description>
        <dbReference type="MIM" id="138500"/>
    </disease>
    <text>The disease is caused by variants affecting the gene represented in this entry.</text>
</comment>
<comment type="disease" evidence="6">
    <disease id="DI-02940">
        <name>Iminoglycinuria</name>
        <acronym>IG</acronym>
        <description>A disorder of renal tubular reabsorption of glycine and imino acids (proline and hydroxyproline), marked by excessive levels of all three substances in the urine.</description>
        <dbReference type="MIM" id="242600"/>
    </disease>
    <text>The disease is caused by variants affecting distinct genetic loci, including the gene represented in this entry. Mutations in SLC36A2 that retain residual transport activity result in the IG phenotype only when combined with haploinsufficiency of the imino acid transporter SLC6A20 or deficiency of the neutral amino acid transporter SLC6A19. Additional polymorphisms and mutations in SLC6A18 can contribute to iminoglycinuria in some families.</text>
</comment>
<comment type="similarity">
    <text evidence="10">Belongs to the amino acid/polyamine transporter 2 family.</text>
</comment>
<gene>
    <name evidence="12" type="primary">SLC36A2</name>
    <name evidence="7" type="synonym">PAT2</name>
    <name evidence="8" type="synonym">TRAMD1</name>
</gene>
<dbReference type="EMBL" id="AY162214">
    <property type="protein sequence ID" value="AAO11788.1"/>
    <property type="molecule type" value="mRNA"/>
</dbReference>
<dbReference type="EMBL" id="AK122630">
    <property type="protein sequence ID" value="BAC85496.1"/>
    <property type="molecule type" value="mRNA"/>
</dbReference>
<dbReference type="EMBL" id="CH471062">
    <property type="protein sequence ID" value="EAW61678.1"/>
    <property type="molecule type" value="Genomic_DNA"/>
</dbReference>
<dbReference type="EMBL" id="BC101100">
    <property type="protein sequence ID" value="AAI01101.1"/>
    <property type="molecule type" value="mRNA"/>
</dbReference>
<dbReference type="EMBL" id="BC101101">
    <property type="protein sequence ID" value="AAI01102.1"/>
    <property type="molecule type" value="mRNA"/>
</dbReference>
<dbReference type="EMBL" id="BC101102">
    <property type="protein sequence ID" value="AAI01103.1"/>
    <property type="molecule type" value="mRNA"/>
</dbReference>
<dbReference type="EMBL" id="BC101103">
    <property type="protein sequence ID" value="AAI01104.1"/>
    <property type="molecule type" value="mRNA"/>
</dbReference>
<dbReference type="CCDS" id="CCDS4315.1">
    <molecule id="Q495M3-1"/>
</dbReference>
<dbReference type="RefSeq" id="NP_861441.2">
    <molecule id="Q495M3-1"/>
    <property type="nucleotide sequence ID" value="NM_181776.3"/>
</dbReference>
<dbReference type="RefSeq" id="XP_016864573.1">
    <property type="nucleotide sequence ID" value="XM_017009084.1"/>
</dbReference>
<dbReference type="FunCoup" id="Q495M3">
    <property type="interactions" value="703"/>
</dbReference>
<dbReference type="IntAct" id="Q495M3">
    <property type="interactions" value="2"/>
</dbReference>
<dbReference type="STRING" id="9606.ENSP00000334223"/>
<dbReference type="DrugBank" id="DB00260">
    <property type="generic name" value="Cycloserine"/>
</dbReference>
<dbReference type="GuidetoPHARMACOLOGY" id="1162"/>
<dbReference type="TCDB" id="2.A.18.8.6">
    <property type="family name" value="the amino acid/auxin permease (aaap) family"/>
</dbReference>
<dbReference type="iPTMnet" id="Q495M3"/>
<dbReference type="PhosphoSitePlus" id="Q495M3"/>
<dbReference type="BioMuta" id="SLC36A2"/>
<dbReference type="DMDM" id="121943282"/>
<dbReference type="jPOST" id="Q495M3"/>
<dbReference type="MassIVE" id="Q495M3"/>
<dbReference type="PaxDb" id="9606-ENSP00000334223"/>
<dbReference type="PeptideAtlas" id="Q495M3"/>
<dbReference type="ProteomicsDB" id="61963">
    <molecule id="Q495M3-1"/>
</dbReference>
<dbReference type="ProteomicsDB" id="61964">
    <molecule id="Q495M3-2"/>
</dbReference>
<dbReference type="ProteomicsDB" id="61965">
    <molecule id="Q495M3-3"/>
</dbReference>
<dbReference type="Antibodypedia" id="28201">
    <property type="antibodies" value="121 antibodies from 24 providers"/>
</dbReference>
<dbReference type="DNASU" id="153201"/>
<dbReference type="Ensembl" id="ENST00000335244.9">
    <molecule id="Q495M3-1"/>
    <property type="protein sequence ID" value="ENSP00000334223.4"/>
    <property type="gene ID" value="ENSG00000186335.9"/>
</dbReference>
<dbReference type="GeneID" id="153201"/>
<dbReference type="KEGG" id="hsa:153201"/>
<dbReference type="MANE-Select" id="ENST00000335244.9">
    <property type="protein sequence ID" value="ENSP00000334223.4"/>
    <property type="RefSeq nucleotide sequence ID" value="NM_181776.3"/>
    <property type="RefSeq protein sequence ID" value="NP_861441.2"/>
</dbReference>
<dbReference type="UCSC" id="uc003lty.3">
    <molecule id="Q495M3-1"/>
    <property type="organism name" value="human"/>
</dbReference>
<dbReference type="AGR" id="HGNC:18762"/>
<dbReference type="CTD" id="153201"/>
<dbReference type="DisGeNET" id="153201"/>
<dbReference type="GeneCards" id="SLC36A2"/>
<dbReference type="HGNC" id="HGNC:18762">
    <property type="gene designation" value="SLC36A2"/>
</dbReference>
<dbReference type="HPA" id="ENSG00000186335">
    <property type="expression patterns" value="Group enriched (kidney, skeletal muscle, tongue)"/>
</dbReference>
<dbReference type="MalaCards" id="SLC36A2"/>
<dbReference type="MIM" id="138500">
    <property type="type" value="phenotype"/>
</dbReference>
<dbReference type="MIM" id="242600">
    <property type="type" value="phenotype"/>
</dbReference>
<dbReference type="MIM" id="608331">
    <property type="type" value="gene"/>
</dbReference>
<dbReference type="neXtProt" id="NX_Q495M3"/>
<dbReference type="OpenTargets" id="ENSG00000186335"/>
<dbReference type="Orphanet" id="42062">
    <property type="disease" value="Iminoglycinuria"/>
</dbReference>
<dbReference type="PharmGKB" id="PA134899820"/>
<dbReference type="VEuPathDB" id="HostDB:ENSG00000186335"/>
<dbReference type="eggNOG" id="KOG1304">
    <property type="taxonomic scope" value="Eukaryota"/>
</dbReference>
<dbReference type="GeneTree" id="ENSGT00940000162044"/>
<dbReference type="InParanoid" id="Q495M3"/>
<dbReference type="OMA" id="SAMYVPN"/>
<dbReference type="OrthoDB" id="1684102at2759"/>
<dbReference type="PAN-GO" id="Q495M3">
    <property type="GO annotations" value="8 GO annotations based on evolutionary models"/>
</dbReference>
<dbReference type="PhylomeDB" id="Q495M3"/>
<dbReference type="TreeFam" id="TF314873"/>
<dbReference type="PathwayCommons" id="Q495M3"/>
<dbReference type="Reactome" id="R-HSA-352230">
    <property type="pathway name" value="Amino acid transport across the plasma membrane"/>
</dbReference>
<dbReference type="Reactome" id="R-HSA-428559">
    <property type="pathway name" value="Proton-coupled neutral amino acid transporters"/>
</dbReference>
<dbReference type="Reactome" id="R-HSA-5619041">
    <property type="pathway name" value="Defective SLC36A2 causes iminoglycinuria (IG) and hyperglycinuria (HG)"/>
</dbReference>
<dbReference type="SignaLink" id="Q495M3"/>
<dbReference type="SIGNOR" id="Q495M3"/>
<dbReference type="BioGRID-ORCS" id="153201">
    <property type="hits" value="5 hits in 1137 CRISPR screens"/>
</dbReference>
<dbReference type="ChiTaRS" id="SLC36A2">
    <property type="organism name" value="human"/>
</dbReference>
<dbReference type="GeneWiki" id="SLC36A2"/>
<dbReference type="GenomeRNAi" id="153201"/>
<dbReference type="Pharos" id="Q495M3">
    <property type="development level" value="Tchem"/>
</dbReference>
<dbReference type="PRO" id="PR:Q495M3"/>
<dbReference type="Proteomes" id="UP000005640">
    <property type="component" value="Chromosome 5"/>
</dbReference>
<dbReference type="RNAct" id="Q495M3">
    <property type="molecule type" value="protein"/>
</dbReference>
<dbReference type="Bgee" id="ENSG00000186335">
    <property type="expression patterns" value="Expressed in quadriceps femoris and 57 other cell types or tissues"/>
</dbReference>
<dbReference type="ExpressionAtlas" id="Q495M3">
    <property type="expression patterns" value="baseline and differential"/>
</dbReference>
<dbReference type="GO" id="GO:0005789">
    <property type="term" value="C:endoplasmic reticulum membrane"/>
    <property type="evidence" value="ECO:0000250"/>
    <property type="project" value="UniProtKB"/>
</dbReference>
<dbReference type="GO" id="GO:0070062">
    <property type="term" value="C:extracellular exosome"/>
    <property type="evidence" value="ECO:0007005"/>
    <property type="project" value="UniProtKB"/>
</dbReference>
<dbReference type="GO" id="GO:0005886">
    <property type="term" value="C:plasma membrane"/>
    <property type="evidence" value="ECO:0000314"/>
    <property type="project" value="UniProtKB"/>
</dbReference>
<dbReference type="GO" id="GO:0055038">
    <property type="term" value="C:recycling endosome membrane"/>
    <property type="evidence" value="ECO:0000250"/>
    <property type="project" value="UniProtKB"/>
</dbReference>
<dbReference type="GO" id="GO:0005774">
    <property type="term" value="C:vacuolar membrane"/>
    <property type="evidence" value="ECO:0000318"/>
    <property type="project" value="GO_Central"/>
</dbReference>
<dbReference type="GO" id="GO:0015171">
    <property type="term" value="F:amino acid transmembrane transporter activity"/>
    <property type="evidence" value="ECO:0000304"/>
    <property type="project" value="Reactome"/>
</dbReference>
<dbReference type="GO" id="GO:0005280">
    <property type="term" value="F:amino acid:proton symporter activity"/>
    <property type="evidence" value="ECO:0000314"/>
    <property type="project" value="UniProtKB"/>
</dbReference>
<dbReference type="GO" id="GO:0015187">
    <property type="term" value="F:glycine transmembrane transporter activity"/>
    <property type="evidence" value="ECO:0000318"/>
    <property type="project" value="GO_Central"/>
</dbReference>
<dbReference type="GO" id="GO:0015180">
    <property type="term" value="F:L-alanine transmembrane transporter activity"/>
    <property type="evidence" value="ECO:0000318"/>
    <property type="project" value="GO_Central"/>
</dbReference>
<dbReference type="GO" id="GO:0015193">
    <property type="term" value="F:L-proline transmembrane transporter activity"/>
    <property type="evidence" value="ECO:0000318"/>
    <property type="project" value="GO_Central"/>
</dbReference>
<dbReference type="GO" id="GO:0005297">
    <property type="term" value="F:proline:proton symporter activity"/>
    <property type="evidence" value="ECO:0000314"/>
    <property type="project" value="UniProtKB"/>
</dbReference>
<dbReference type="GO" id="GO:0006865">
    <property type="term" value="P:amino acid transport"/>
    <property type="evidence" value="ECO:0000304"/>
    <property type="project" value="Reactome"/>
</dbReference>
<dbReference type="GO" id="GO:0015816">
    <property type="term" value="P:glycine transport"/>
    <property type="evidence" value="ECO:0000318"/>
    <property type="project" value="GO_Central"/>
</dbReference>
<dbReference type="GO" id="GO:0015808">
    <property type="term" value="P:L-alanine transport"/>
    <property type="evidence" value="ECO:0000318"/>
    <property type="project" value="GO_Central"/>
</dbReference>
<dbReference type="GO" id="GO:0006811">
    <property type="term" value="P:monoatomic ion transport"/>
    <property type="evidence" value="ECO:0000304"/>
    <property type="project" value="Reactome"/>
</dbReference>
<dbReference type="GO" id="GO:0035524">
    <property type="term" value="P:proline transmembrane transport"/>
    <property type="evidence" value="ECO:0000315"/>
    <property type="project" value="UniProtKB"/>
</dbReference>
<dbReference type="GO" id="GO:0015824">
    <property type="term" value="P:proline transport"/>
    <property type="evidence" value="ECO:0007669"/>
    <property type="project" value="Ensembl"/>
</dbReference>
<dbReference type="GO" id="GO:1902600">
    <property type="term" value="P:proton transmembrane transport"/>
    <property type="evidence" value="ECO:0000318"/>
    <property type="project" value="GO_Central"/>
</dbReference>
<dbReference type="InterPro" id="IPR013057">
    <property type="entry name" value="AA_transpt_TM"/>
</dbReference>
<dbReference type="PANTHER" id="PTHR22950">
    <property type="entry name" value="AMINO ACID TRANSPORTER"/>
    <property type="match status" value="1"/>
</dbReference>
<dbReference type="PANTHER" id="PTHR22950:SF185">
    <property type="entry name" value="PROTON-COUPLED AMINO ACID TRANSPORTER 2"/>
    <property type="match status" value="1"/>
</dbReference>
<dbReference type="Pfam" id="PF01490">
    <property type="entry name" value="Aa_trans"/>
    <property type="match status" value="1"/>
</dbReference>